<proteinExistence type="inferred from homology"/>
<keyword id="KW-1185">Reference proteome</keyword>
<keyword id="KW-0687">Ribonucleoprotein</keyword>
<keyword id="KW-0689">Ribosomal protein</keyword>
<organism>
    <name type="scientific">Streptococcus pyogenes serotype M1</name>
    <dbReference type="NCBI Taxonomy" id="301447"/>
    <lineage>
        <taxon>Bacteria</taxon>
        <taxon>Bacillati</taxon>
        <taxon>Bacillota</taxon>
        <taxon>Bacilli</taxon>
        <taxon>Lactobacillales</taxon>
        <taxon>Streptococcaceae</taxon>
        <taxon>Streptococcus</taxon>
    </lineage>
</organism>
<evidence type="ECO:0000250" key="1"/>
<evidence type="ECO:0000256" key="2">
    <source>
        <dbReference type="SAM" id="MobiDB-lite"/>
    </source>
</evidence>
<evidence type="ECO:0000305" key="3"/>
<reference key="1">
    <citation type="journal article" date="2001" name="Proc. Natl. Acad. Sci. U.S.A.">
        <title>Complete genome sequence of an M1 strain of Streptococcus pyogenes.</title>
        <authorList>
            <person name="Ferretti J.J."/>
            <person name="McShan W.M."/>
            <person name="Ajdic D.J."/>
            <person name="Savic D.J."/>
            <person name="Savic G."/>
            <person name="Lyon K."/>
            <person name="Primeaux C."/>
            <person name="Sezate S."/>
            <person name="Suvorov A.N."/>
            <person name="Kenton S."/>
            <person name="Lai H.S."/>
            <person name="Lin S.P."/>
            <person name="Qian Y."/>
            <person name="Jia H.G."/>
            <person name="Najar F.Z."/>
            <person name="Ren Q."/>
            <person name="Zhu H."/>
            <person name="Song L."/>
            <person name="White J."/>
            <person name="Yuan X."/>
            <person name="Clifton S.W."/>
            <person name="Roe B.A."/>
            <person name="McLaughlin R.E."/>
        </authorList>
    </citation>
    <scope>NUCLEOTIDE SEQUENCE [LARGE SCALE GENOMIC DNA]</scope>
    <source>
        <strain>ATCC 700294 / SF370 / Serotype M1</strain>
    </source>
</reference>
<reference key="2">
    <citation type="journal article" date="2005" name="J. Infect. Dis.">
        <title>Evolutionary origin and emergence of a highly successful clone of serotype M1 group A Streptococcus involved multiple horizontal gene transfer events.</title>
        <authorList>
            <person name="Sumby P."/>
            <person name="Porcella S.F."/>
            <person name="Madrigal A.G."/>
            <person name="Barbian K.D."/>
            <person name="Virtaneva K."/>
            <person name="Ricklefs S.M."/>
            <person name="Sturdevant D.E."/>
            <person name="Graham M.R."/>
            <person name="Vuopio-Varkila J."/>
            <person name="Hoe N.P."/>
            <person name="Musser J.M."/>
        </authorList>
    </citation>
    <scope>NUCLEOTIDE SEQUENCE [LARGE SCALE GENOMIC DNA]</scope>
    <source>
        <strain>ATCC BAA-947 / MGAS5005 / Serotype M1</strain>
    </source>
</reference>
<accession>P0C0D6</accession>
<accession>P60830</accession>
<accession>Q491Q4</accession>
<accession>Q9A1X3</accession>
<feature type="chain" id="PRO_0000129291" description="Large ribosomal subunit protein uL4">
    <location>
        <begin position="1"/>
        <end position="207"/>
    </location>
</feature>
<feature type="region of interest" description="Disordered" evidence="2">
    <location>
        <begin position="49"/>
        <end position="78"/>
    </location>
</feature>
<comment type="function">
    <text evidence="1">One of the primary rRNA binding proteins, this protein initially binds near the 5'-end of the 23S rRNA. It is important during the early stages of 50S assembly. It makes multiple contacts with different domains of the 23S rRNA in the assembled 50S subunit and ribosome (By similarity).</text>
</comment>
<comment type="function">
    <text evidence="1">Forms part of the polypeptide exit tunnel.</text>
</comment>
<comment type="subunit">
    <text evidence="1">Part of the 50S ribosomal subunit.</text>
</comment>
<comment type="similarity">
    <text evidence="3">Belongs to the universal ribosomal protein uL4 family.</text>
</comment>
<name>RL4_STRP1</name>
<sequence>MANVKLFDQTGKEVSSVELNDAIFGIEPNESVVFDVVISQRASLRQGTHAVKNRSAVSGGGRKPWRQKGTGRARQGSIRSPQWRGGGVVFGPTPRSYGYKLPQKVRRLALKSVYSAKVAEDKFVAVEGLSFAAPKTAEFAKVLSALSIDTKVLVLVEEGNEFAALSARNLPNVTVATAATASVLDIVNADKLLVTKEAISTIEEVLA</sequence>
<dbReference type="EMBL" id="AE004092">
    <property type="protein sequence ID" value="AAK33183.1"/>
    <property type="molecule type" value="Genomic_DNA"/>
</dbReference>
<dbReference type="EMBL" id="CP000017">
    <property type="protein sequence ID" value="AAZ50664.1"/>
    <property type="molecule type" value="Genomic_DNA"/>
</dbReference>
<dbReference type="RefSeq" id="NP_268461.1">
    <property type="nucleotide sequence ID" value="NC_002737.2"/>
</dbReference>
<dbReference type="SMR" id="P0C0D6"/>
<dbReference type="PaxDb" id="1314-HKU360_00078"/>
<dbReference type="KEGG" id="spy:SPy_0050"/>
<dbReference type="KEGG" id="spz:M5005_Spy0045"/>
<dbReference type="PATRIC" id="fig|160490.10.peg.45"/>
<dbReference type="HOGENOM" id="CLU_041575_5_2_9"/>
<dbReference type="OMA" id="PQVHILE"/>
<dbReference type="PRO" id="PR:P0C0D6"/>
<dbReference type="Proteomes" id="UP000000750">
    <property type="component" value="Chromosome"/>
</dbReference>
<dbReference type="GO" id="GO:1990904">
    <property type="term" value="C:ribonucleoprotein complex"/>
    <property type="evidence" value="ECO:0007669"/>
    <property type="project" value="UniProtKB-KW"/>
</dbReference>
<dbReference type="GO" id="GO:0005840">
    <property type="term" value="C:ribosome"/>
    <property type="evidence" value="ECO:0007669"/>
    <property type="project" value="UniProtKB-KW"/>
</dbReference>
<dbReference type="GO" id="GO:0019843">
    <property type="term" value="F:rRNA binding"/>
    <property type="evidence" value="ECO:0007669"/>
    <property type="project" value="UniProtKB-UniRule"/>
</dbReference>
<dbReference type="GO" id="GO:0003735">
    <property type="term" value="F:structural constituent of ribosome"/>
    <property type="evidence" value="ECO:0007669"/>
    <property type="project" value="InterPro"/>
</dbReference>
<dbReference type="GO" id="GO:0006412">
    <property type="term" value="P:translation"/>
    <property type="evidence" value="ECO:0007669"/>
    <property type="project" value="UniProtKB-UniRule"/>
</dbReference>
<dbReference type="FunFam" id="3.40.1370.10:FF:000003">
    <property type="entry name" value="50S ribosomal protein L4"/>
    <property type="match status" value="1"/>
</dbReference>
<dbReference type="Gene3D" id="3.40.1370.10">
    <property type="match status" value="1"/>
</dbReference>
<dbReference type="HAMAP" id="MF_01328_B">
    <property type="entry name" value="Ribosomal_uL4_B"/>
    <property type="match status" value="1"/>
</dbReference>
<dbReference type="InterPro" id="IPR002136">
    <property type="entry name" value="Ribosomal_uL4"/>
</dbReference>
<dbReference type="InterPro" id="IPR013005">
    <property type="entry name" value="Ribosomal_uL4-like"/>
</dbReference>
<dbReference type="InterPro" id="IPR023574">
    <property type="entry name" value="Ribosomal_uL4_dom_sf"/>
</dbReference>
<dbReference type="NCBIfam" id="TIGR03953">
    <property type="entry name" value="rplD_bact"/>
    <property type="match status" value="1"/>
</dbReference>
<dbReference type="PANTHER" id="PTHR10746">
    <property type="entry name" value="50S RIBOSOMAL PROTEIN L4"/>
    <property type="match status" value="1"/>
</dbReference>
<dbReference type="PANTHER" id="PTHR10746:SF6">
    <property type="entry name" value="LARGE RIBOSOMAL SUBUNIT PROTEIN UL4M"/>
    <property type="match status" value="1"/>
</dbReference>
<dbReference type="Pfam" id="PF00573">
    <property type="entry name" value="Ribosomal_L4"/>
    <property type="match status" value="1"/>
</dbReference>
<dbReference type="SUPFAM" id="SSF52166">
    <property type="entry name" value="Ribosomal protein L4"/>
    <property type="match status" value="1"/>
</dbReference>
<protein>
    <recommendedName>
        <fullName evidence="3">Large ribosomal subunit protein uL4</fullName>
    </recommendedName>
    <alternativeName>
        <fullName>50S ribosomal protein L4</fullName>
    </alternativeName>
</protein>
<gene>
    <name type="primary">rplD</name>
    <name type="ordered locus">SPy_0050</name>
    <name type="ordered locus">M5005_Spy0045</name>
</gene>